<reference key="1">
    <citation type="journal article" date="2010" name="Appl. Environ. Microbiol.">
        <title>Conserved symbiotic plasmid DNA sequences in the multireplicon pangenomic structure of Rhizobium etli.</title>
        <authorList>
            <person name="Gonzalez V."/>
            <person name="Acosta J.L."/>
            <person name="Santamaria R.I."/>
            <person name="Bustos P."/>
            <person name="Fernandez J.L."/>
            <person name="Hernandez Gonzalez I.L."/>
            <person name="Diaz R."/>
            <person name="Flores M."/>
            <person name="Palacios R."/>
            <person name="Mora J."/>
            <person name="Davila G."/>
        </authorList>
    </citation>
    <scope>NUCLEOTIDE SEQUENCE [LARGE SCALE GENOMIC DNA]</scope>
    <source>
        <strain>CIAT 652</strain>
    </source>
</reference>
<keyword id="KW-0004">4Fe-4S</keyword>
<keyword id="KW-0963">Cytoplasm</keyword>
<keyword id="KW-0408">Iron</keyword>
<keyword id="KW-0411">Iron-sulfur</keyword>
<keyword id="KW-0479">Metal-binding</keyword>
<keyword id="KW-0949">S-adenosyl-L-methionine</keyword>
<keyword id="KW-0808">Transferase</keyword>
<keyword id="KW-0819">tRNA processing</keyword>
<dbReference type="EC" id="2.8.4.3" evidence="1"/>
<dbReference type="EMBL" id="CP001074">
    <property type="protein sequence ID" value="ACE89410.1"/>
    <property type="molecule type" value="Genomic_DNA"/>
</dbReference>
<dbReference type="SMR" id="B3PZB6"/>
<dbReference type="KEGG" id="rec:RHECIAT_CH0000416"/>
<dbReference type="eggNOG" id="COG0621">
    <property type="taxonomic scope" value="Bacteria"/>
</dbReference>
<dbReference type="HOGENOM" id="CLU_018697_2_0_5"/>
<dbReference type="Proteomes" id="UP000008817">
    <property type="component" value="Chromosome"/>
</dbReference>
<dbReference type="GO" id="GO:0005829">
    <property type="term" value="C:cytosol"/>
    <property type="evidence" value="ECO:0007669"/>
    <property type="project" value="TreeGrafter"/>
</dbReference>
<dbReference type="GO" id="GO:0051539">
    <property type="term" value="F:4 iron, 4 sulfur cluster binding"/>
    <property type="evidence" value="ECO:0007669"/>
    <property type="project" value="UniProtKB-UniRule"/>
</dbReference>
<dbReference type="GO" id="GO:0046872">
    <property type="term" value="F:metal ion binding"/>
    <property type="evidence" value="ECO:0007669"/>
    <property type="project" value="UniProtKB-KW"/>
</dbReference>
<dbReference type="GO" id="GO:0035597">
    <property type="term" value="F:N6-isopentenyladenosine methylthiotransferase activity"/>
    <property type="evidence" value="ECO:0007669"/>
    <property type="project" value="TreeGrafter"/>
</dbReference>
<dbReference type="CDD" id="cd01335">
    <property type="entry name" value="Radical_SAM"/>
    <property type="match status" value="1"/>
</dbReference>
<dbReference type="FunFam" id="3.40.50.12160:FF:000001">
    <property type="entry name" value="tRNA-2-methylthio-N(6)-dimethylallyladenosine synthase"/>
    <property type="match status" value="1"/>
</dbReference>
<dbReference type="FunFam" id="3.80.30.20:FF:000001">
    <property type="entry name" value="tRNA-2-methylthio-N(6)-dimethylallyladenosine synthase 2"/>
    <property type="match status" value="1"/>
</dbReference>
<dbReference type="Gene3D" id="3.40.50.12160">
    <property type="entry name" value="Methylthiotransferase, N-terminal domain"/>
    <property type="match status" value="1"/>
</dbReference>
<dbReference type="Gene3D" id="3.80.30.20">
    <property type="entry name" value="tm_1862 like domain"/>
    <property type="match status" value="1"/>
</dbReference>
<dbReference type="HAMAP" id="MF_01864">
    <property type="entry name" value="tRNA_metthiotr_MiaB"/>
    <property type="match status" value="1"/>
</dbReference>
<dbReference type="InterPro" id="IPR006638">
    <property type="entry name" value="Elp3/MiaA/NifB-like_rSAM"/>
</dbReference>
<dbReference type="InterPro" id="IPR005839">
    <property type="entry name" value="Methylthiotransferase"/>
</dbReference>
<dbReference type="InterPro" id="IPR020612">
    <property type="entry name" value="Methylthiotransferase_CS"/>
</dbReference>
<dbReference type="InterPro" id="IPR013848">
    <property type="entry name" value="Methylthiotransferase_N"/>
</dbReference>
<dbReference type="InterPro" id="IPR038135">
    <property type="entry name" value="Methylthiotransferase_N_sf"/>
</dbReference>
<dbReference type="InterPro" id="IPR006463">
    <property type="entry name" value="MiaB_methiolase"/>
</dbReference>
<dbReference type="InterPro" id="IPR007197">
    <property type="entry name" value="rSAM"/>
</dbReference>
<dbReference type="InterPro" id="IPR023404">
    <property type="entry name" value="rSAM_horseshoe"/>
</dbReference>
<dbReference type="InterPro" id="IPR002792">
    <property type="entry name" value="TRAM_dom"/>
</dbReference>
<dbReference type="NCBIfam" id="TIGR01574">
    <property type="entry name" value="miaB-methiolase"/>
    <property type="match status" value="1"/>
</dbReference>
<dbReference type="NCBIfam" id="TIGR00089">
    <property type="entry name" value="MiaB/RimO family radical SAM methylthiotransferase"/>
    <property type="match status" value="1"/>
</dbReference>
<dbReference type="PANTHER" id="PTHR43020">
    <property type="entry name" value="CDK5 REGULATORY SUBUNIT-ASSOCIATED PROTEIN 1"/>
    <property type="match status" value="1"/>
</dbReference>
<dbReference type="PANTHER" id="PTHR43020:SF2">
    <property type="entry name" value="MITOCHONDRIAL TRNA METHYLTHIOTRANSFERASE CDK5RAP1"/>
    <property type="match status" value="1"/>
</dbReference>
<dbReference type="Pfam" id="PF04055">
    <property type="entry name" value="Radical_SAM"/>
    <property type="match status" value="1"/>
</dbReference>
<dbReference type="Pfam" id="PF01938">
    <property type="entry name" value="TRAM"/>
    <property type="match status" value="1"/>
</dbReference>
<dbReference type="Pfam" id="PF00919">
    <property type="entry name" value="UPF0004"/>
    <property type="match status" value="1"/>
</dbReference>
<dbReference type="SFLD" id="SFLDF00273">
    <property type="entry name" value="(dimethylallyl)adenosine_tRNA"/>
    <property type="match status" value="1"/>
</dbReference>
<dbReference type="SFLD" id="SFLDG01082">
    <property type="entry name" value="B12-binding_domain_containing"/>
    <property type="match status" value="1"/>
</dbReference>
<dbReference type="SFLD" id="SFLDG01061">
    <property type="entry name" value="methylthiotransferase"/>
    <property type="match status" value="1"/>
</dbReference>
<dbReference type="SMART" id="SM00729">
    <property type="entry name" value="Elp3"/>
    <property type="match status" value="1"/>
</dbReference>
<dbReference type="SUPFAM" id="SSF102114">
    <property type="entry name" value="Radical SAM enzymes"/>
    <property type="match status" value="1"/>
</dbReference>
<dbReference type="PROSITE" id="PS51449">
    <property type="entry name" value="MTTASE_N"/>
    <property type="match status" value="1"/>
</dbReference>
<dbReference type="PROSITE" id="PS01278">
    <property type="entry name" value="MTTASE_RADICAL"/>
    <property type="match status" value="1"/>
</dbReference>
<dbReference type="PROSITE" id="PS51918">
    <property type="entry name" value="RADICAL_SAM"/>
    <property type="match status" value="1"/>
</dbReference>
<dbReference type="PROSITE" id="PS50926">
    <property type="entry name" value="TRAM"/>
    <property type="match status" value="1"/>
</dbReference>
<proteinExistence type="inferred from homology"/>
<organism>
    <name type="scientific">Rhizobium etli (strain CIAT 652)</name>
    <dbReference type="NCBI Taxonomy" id="491916"/>
    <lineage>
        <taxon>Bacteria</taxon>
        <taxon>Pseudomonadati</taxon>
        <taxon>Pseudomonadota</taxon>
        <taxon>Alphaproteobacteria</taxon>
        <taxon>Hyphomicrobiales</taxon>
        <taxon>Rhizobiaceae</taxon>
        <taxon>Rhizobium/Agrobacterium group</taxon>
        <taxon>Rhizobium</taxon>
    </lineage>
</organism>
<comment type="function">
    <text evidence="1">Catalyzes the methylthiolation of N6-(dimethylallyl)adenosine (i(6)A), leading to the formation of 2-methylthio-N6-(dimethylallyl)adenosine (ms(2)i(6)A) at position 37 in tRNAs that read codons beginning with uridine.</text>
</comment>
<comment type="catalytic activity">
    <reaction evidence="1">
        <text>N(6)-dimethylallyladenosine(37) in tRNA + (sulfur carrier)-SH + AH2 + 2 S-adenosyl-L-methionine = 2-methylsulfanyl-N(6)-dimethylallyladenosine(37) in tRNA + (sulfur carrier)-H + 5'-deoxyadenosine + L-methionine + A + S-adenosyl-L-homocysteine + 2 H(+)</text>
        <dbReference type="Rhea" id="RHEA:37067"/>
        <dbReference type="Rhea" id="RHEA-COMP:10375"/>
        <dbReference type="Rhea" id="RHEA-COMP:10376"/>
        <dbReference type="Rhea" id="RHEA-COMP:14737"/>
        <dbReference type="Rhea" id="RHEA-COMP:14739"/>
        <dbReference type="ChEBI" id="CHEBI:13193"/>
        <dbReference type="ChEBI" id="CHEBI:15378"/>
        <dbReference type="ChEBI" id="CHEBI:17319"/>
        <dbReference type="ChEBI" id="CHEBI:17499"/>
        <dbReference type="ChEBI" id="CHEBI:29917"/>
        <dbReference type="ChEBI" id="CHEBI:57844"/>
        <dbReference type="ChEBI" id="CHEBI:57856"/>
        <dbReference type="ChEBI" id="CHEBI:59789"/>
        <dbReference type="ChEBI" id="CHEBI:64428"/>
        <dbReference type="ChEBI" id="CHEBI:74415"/>
        <dbReference type="ChEBI" id="CHEBI:74417"/>
        <dbReference type="EC" id="2.8.4.3"/>
    </reaction>
</comment>
<comment type="cofactor">
    <cofactor evidence="1">
        <name>[4Fe-4S] cluster</name>
        <dbReference type="ChEBI" id="CHEBI:49883"/>
    </cofactor>
    <text evidence="1">Binds 2 [4Fe-4S] clusters. One cluster is coordinated with 3 cysteines and an exchangeable S-adenosyl-L-methionine.</text>
</comment>
<comment type="subunit">
    <text evidence="1">Monomer.</text>
</comment>
<comment type="subcellular location">
    <subcellularLocation>
        <location evidence="1">Cytoplasm</location>
    </subcellularLocation>
</comment>
<comment type="similarity">
    <text evidence="1">Belongs to the methylthiotransferase family. MiaB subfamily.</text>
</comment>
<accession>B3PZB6</accession>
<name>MIAB_RHIE6</name>
<evidence type="ECO:0000255" key="1">
    <source>
        <dbReference type="HAMAP-Rule" id="MF_01864"/>
    </source>
</evidence>
<evidence type="ECO:0000255" key="2">
    <source>
        <dbReference type="PROSITE-ProRule" id="PRU01266"/>
    </source>
</evidence>
<feature type="chain" id="PRO_0000374482" description="tRNA-2-methylthio-N(6)-dimethylallyladenosine synthase">
    <location>
        <begin position="1"/>
        <end position="469"/>
    </location>
</feature>
<feature type="domain" description="MTTase N-terminal" evidence="1">
    <location>
        <begin position="22"/>
        <end position="142"/>
    </location>
</feature>
<feature type="domain" description="Radical SAM core" evidence="2">
    <location>
        <begin position="169"/>
        <end position="401"/>
    </location>
</feature>
<feature type="domain" description="TRAM" evidence="1">
    <location>
        <begin position="404"/>
        <end position="466"/>
    </location>
</feature>
<feature type="binding site" evidence="1">
    <location>
        <position position="31"/>
    </location>
    <ligand>
        <name>[4Fe-4S] cluster</name>
        <dbReference type="ChEBI" id="CHEBI:49883"/>
        <label>1</label>
    </ligand>
</feature>
<feature type="binding site" evidence="1">
    <location>
        <position position="67"/>
    </location>
    <ligand>
        <name>[4Fe-4S] cluster</name>
        <dbReference type="ChEBI" id="CHEBI:49883"/>
        <label>1</label>
    </ligand>
</feature>
<feature type="binding site" evidence="1">
    <location>
        <position position="105"/>
    </location>
    <ligand>
        <name>[4Fe-4S] cluster</name>
        <dbReference type="ChEBI" id="CHEBI:49883"/>
        <label>1</label>
    </ligand>
</feature>
<feature type="binding site" evidence="1">
    <location>
        <position position="183"/>
    </location>
    <ligand>
        <name>[4Fe-4S] cluster</name>
        <dbReference type="ChEBI" id="CHEBI:49883"/>
        <label>2</label>
        <note>4Fe-4S-S-AdoMet</note>
    </ligand>
</feature>
<feature type="binding site" evidence="1">
    <location>
        <position position="187"/>
    </location>
    <ligand>
        <name>[4Fe-4S] cluster</name>
        <dbReference type="ChEBI" id="CHEBI:49883"/>
        <label>2</label>
        <note>4Fe-4S-S-AdoMet</note>
    </ligand>
</feature>
<feature type="binding site" evidence="1">
    <location>
        <position position="190"/>
    </location>
    <ligand>
        <name>[4Fe-4S] cluster</name>
        <dbReference type="ChEBI" id="CHEBI:49883"/>
        <label>2</label>
        <note>4Fe-4S-S-AdoMet</note>
    </ligand>
</feature>
<sequence length="469" mass="52485">MTQDSALLQAPEPMLRDGSNSRKVFIKTYGCQMNVYDSTRMSDALARDGYEPTEDMEEADLVLLNTCHIREKAAEKVYSALGRLREMKKKKAADGREMMIGVTGCVAQAEGEEILRRAPAVDVVIGPQTYHRLPEALRRAQQGQRVVDTEYAIEDKFEHLPIAESRKIRARGVTAFLTVQEGCDKFCTFCVVPYTRGSEVSRPVSQIVEEAEKLVEAGVREITLLGQNVNAWHGAGPRGEAWSLGDLLYRLAEIPGLARLRYTTSHPRDMDDRLIEAHRDLRALMPYLHLPVQSGSDRILKAMNRRHTAAEYLSLIERIRTVRPDIALSGDFITGFPGETDADFEDTLRLVEEVRYAQAFSFKYSTRPGTPGAELKDQVPEEIKAERLERLQALLLKQQQEFAESCIGKEIDLLLEKPGRMPGQLIGRSPWLQSVNVDAKASQIGDIIKVRITGTGTNSLFAERAEAAV</sequence>
<protein>
    <recommendedName>
        <fullName evidence="1">tRNA-2-methylthio-N(6)-dimethylallyladenosine synthase</fullName>
        <ecNumber evidence="1">2.8.4.3</ecNumber>
    </recommendedName>
    <alternativeName>
        <fullName evidence="1">(Dimethylallyl)adenosine tRNA methylthiotransferase MiaB</fullName>
    </alternativeName>
    <alternativeName>
        <fullName evidence="1">tRNA-i(6)A37 methylthiotransferase</fullName>
    </alternativeName>
</protein>
<gene>
    <name evidence="1" type="primary">miaB</name>
    <name type="ordered locus">RHECIAT_CH0000416</name>
</gene>